<name>ES2B_PELLE</name>
<accession>P40846</accession>
<evidence type="ECO:0000269" key="1">
    <source>
    </source>
</evidence>
<evidence type="ECO:0000303" key="2">
    <source>
    </source>
</evidence>
<evidence type="ECO:0000305" key="3"/>
<evidence type="ECO:0000305" key="4">
    <source>
    </source>
</evidence>
<proteinExistence type="evidence at protein level"/>
<dbReference type="PIR" id="F53578">
    <property type="entry name" value="F53578"/>
</dbReference>
<dbReference type="SMR" id="P40846"/>
<dbReference type="GO" id="GO:0005576">
    <property type="term" value="C:extracellular region"/>
    <property type="evidence" value="ECO:0007669"/>
    <property type="project" value="UniProtKB-SubCell"/>
</dbReference>
<dbReference type="GO" id="GO:0042742">
    <property type="term" value="P:defense response to bacterium"/>
    <property type="evidence" value="ECO:0007669"/>
    <property type="project" value="UniProtKB-KW"/>
</dbReference>
<dbReference type="GO" id="GO:0031640">
    <property type="term" value="P:killing of cells of another organism"/>
    <property type="evidence" value="ECO:0007669"/>
    <property type="project" value="UniProtKB-KW"/>
</dbReference>
<dbReference type="InterPro" id="IPR012521">
    <property type="entry name" value="Antimicrobial_frog_2"/>
</dbReference>
<dbReference type="Pfam" id="PF08023">
    <property type="entry name" value="Antimicrobial_2"/>
    <property type="match status" value="1"/>
</dbReference>
<reference key="1">
    <citation type="journal article" date="1994" name="J. Biol. Chem.">
        <title>Antimicrobial peptides from skin secretions of Rana esculenta. Molecular cloning of cDNAs encoding esculentin and brevinins and isolation of new active peptides.</title>
        <authorList>
            <person name="Simmaco M."/>
            <person name="Mignogna G."/>
            <person name="Barra D."/>
            <person name="Bossa F."/>
        </authorList>
    </citation>
    <scope>PROTEIN SEQUENCE</scope>
    <scope>DISULFIDE BOND</scope>
    <scope>SUBCELLULAR LOCATION</scope>
    <source>
        <tissue>Skin secretion</tissue>
    </source>
</reference>
<protein>
    <recommendedName>
        <fullName evidence="2">Esculentin-2B</fullName>
    </recommendedName>
</protein>
<feature type="peptide" id="PRO_0000044649" description="Esculentin-2B" evidence="1">
    <location>
        <begin position="1"/>
        <end position="37"/>
    </location>
</feature>
<feature type="disulfide bond" evidence="1">
    <location>
        <begin position="31"/>
        <end position="37"/>
    </location>
</feature>
<comment type="function">
    <text>Shows antibacterial activity against representative Gram-negative and Gram-positive bacterial species, and hemolytic activity.</text>
</comment>
<comment type="subcellular location">
    <subcellularLocation>
        <location evidence="1">Secreted</location>
    </subcellularLocation>
</comment>
<comment type="tissue specificity">
    <text evidence="4">Expressed by the skin glands.</text>
</comment>
<comment type="similarity">
    <text evidence="3">Belongs to the frog skin active peptide (FSAP) family. Esculentin subfamily.</text>
</comment>
<comment type="online information" name="The antimicrobial peptide database">
    <link uri="https://wangapd3.com/database/query_output.php?ID=00084"/>
</comment>
<organism>
    <name type="scientific">Pelophylax lessonae</name>
    <name type="common">Pool frog</name>
    <name type="synonym">Rana lessonae</name>
    <dbReference type="NCBI Taxonomy" id="45623"/>
    <lineage>
        <taxon>Eukaryota</taxon>
        <taxon>Metazoa</taxon>
        <taxon>Chordata</taxon>
        <taxon>Craniata</taxon>
        <taxon>Vertebrata</taxon>
        <taxon>Euteleostomi</taxon>
        <taxon>Amphibia</taxon>
        <taxon>Batrachia</taxon>
        <taxon>Anura</taxon>
        <taxon>Neobatrachia</taxon>
        <taxon>Ranoidea</taxon>
        <taxon>Ranidae</taxon>
        <taxon>Pelophylax</taxon>
    </lineage>
</organism>
<sequence length="37" mass="3720">GIFSLVKGAAKLAGKGLAKEGGKFGLELIACKIAKQC</sequence>
<keyword id="KW-0878">Amphibian defense peptide</keyword>
<keyword id="KW-0044">Antibiotic</keyword>
<keyword id="KW-0929">Antimicrobial</keyword>
<keyword id="KW-0204">Cytolysis</keyword>
<keyword id="KW-0903">Direct protein sequencing</keyword>
<keyword id="KW-1015">Disulfide bond</keyword>
<keyword id="KW-0354">Hemolysis</keyword>
<keyword id="KW-0964">Secreted</keyword>